<keyword id="KW-0002">3D-structure</keyword>
<keyword id="KW-0025">Alternative splicing</keyword>
<keyword id="KW-0446">Lipid-binding</keyword>
<keyword id="KW-1267">Proteomics identification</keyword>
<keyword id="KW-1185">Reference proteome</keyword>
<keyword id="KW-0813">Transport</keyword>
<gene>
    <name type="primary">SEC14L4</name>
    <name type="synonym">TAP3</name>
</gene>
<sequence>MSSRVGDLSPQQQEALARFRENLQDLLPILPNADDYFLLRWLRARNFDLQKSEDMLRRHMEFRKQQDLDNIVTWQPPEVIQLYDSGGLCGYDYEGCPVYFNIIGSLDPKGLLLSASKQDMIRKRIKVCELLLHECELQTQKLGRKIEMALMVFDMEGLSLKHLWKPAVEVYQQFFSILEANYPETLKNLIVIRAPKLFPVAFNLVKSFMSEETRRKIVILGDNWKQELTKFISPDQLPVEFGGTMTDPDGNPKCLTKINYGGEVPKSYYLCEQVRLQYEHTRSVGRGSSLQVENEILFPGCVLRWQFASDGGDIGFGVFLKTKMGEQQSAREMTEVLPSQRYNAHMVPEDGSLTCLQAGVYVLRFDNTYSRMHAKKLSYTVEVLLPDKASEETLQSLKAMRPSPTQ</sequence>
<protein>
    <recommendedName>
        <fullName>SEC14-like protein 4</fullName>
    </recommendedName>
    <alternativeName>
        <fullName>Tocopherol-associated protein 3</fullName>
    </alternativeName>
</protein>
<name>S14L4_HUMAN</name>
<comment type="function">
    <text>Probable hydrophobic ligand-binding protein; may play a role in the transport of hydrophobic ligands like tocopherol, squalene and phospholipids.</text>
</comment>
<comment type="interaction">
    <interactant intactId="EBI-10320311">
        <id>Q9UDX3</id>
    </interactant>
    <interactant intactId="EBI-3919268">
        <id>Q96LC9</id>
        <label>BMF</label>
    </interactant>
    <organismsDiffer>false</organismsDiffer>
    <experiments>3</experiments>
</comment>
<comment type="interaction">
    <interactant intactId="EBI-10320311">
        <id>Q9UDX3</id>
    </interactant>
    <interactant intactId="EBI-748171">
        <id>O43186</id>
        <label>CRX</label>
    </interactant>
    <organismsDiffer>false</organismsDiffer>
    <experiments>3</experiments>
</comment>
<comment type="interaction">
    <interactant intactId="EBI-10320311">
        <id>Q9UDX3</id>
    </interactant>
    <interactant intactId="EBI-1188472">
        <id>P78358</id>
        <label>CTAG1B</label>
    </interactant>
    <organismsDiffer>false</organismsDiffer>
    <experiments>3</experiments>
</comment>
<comment type="interaction">
    <interactant intactId="EBI-10320311">
        <id>Q9UDX3</id>
    </interactant>
    <interactant intactId="EBI-8803200">
        <id>Q9NYQ3</id>
        <label>HAO2</label>
    </interactant>
    <organismsDiffer>false</organismsDiffer>
    <experiments>3</experiments>
</comment>
<comment type="interaction">
    <interactant intactId="EBI-10320311">
        <id>Q9UDX3</id>
    </interactant>
    <interactant intactId="EBI-6509505">
        <id>Q0VD86</id>
        <label>INCA1</label>
    </interactant>
    <organismsDiffer>false</organismsDiffer>
    <experiments>3</experiments>
</comment>
<comment type="interaction">
    <interactant intactId="EBI-10320311">
        <id>Q9UDX3</id>
    </interactant>
    <interactant intactId="EBI-948001">
        <id>Q15323</id>
        <label>KRT31</label>
    </interactant>
    <organismsDiffer>false</organismsDiffer>
    <experiments>3</experiments>
</comment>
<comment type="interaction">
    <interactant intactId="EBI-10320311">
        <id>Q9UDX3</id>
    </interactant>
    <interactant intactId="EBI-1047093">
        <id>O76011</id>
        <label>KRT34</label>
    </interactant>
    <organismsDiffer>false</organismsDiffer>
    <experiments>3</experiments>
</comment>
<comment type="interaction">
    <interactant intactId="EBI-10320311">
        <id>Q9UDX3</id>
    </interactant>
    <interactant intactId="EBI-2864512">
        <id>P50221</id>
        <label>MEOX1</label>
    </interactant>
    <organismsDiffer>false</organismsDiffer>
    <experiments>3</experiments>
</comment>
<comment type="interaction">
    <interactant intactId="EBI-10320311">
        <id>Q9UDX3</id>
    </interactant>
    <interactant intactId="EBI-16439278">
        <id>Q6FHY5</id>
        <label>MEOX2</label>
    </interactant>
    <organismsDiffer>false</organismsDiffer>
    <experiments>3</experiments>
</comment>
<comment type="interaction">
    <interactant intactId="EBI-10320311">
        <id>Q9UDX3</id>
    </interactant>
    <interactant intactId="EBI-296331">
        <id>Q02548</id>
        <label>PAX5</label>
    </interactant>
    <organismsDiffer>false</organismsDiffer>
    <experiments>3</experiments>
</comment>
<comment type="interaction">
    <interactant intactId="EBI-10320311">
        <id>Q9UDX3</id>
    </interactant>
    <interactant intactId="EBI-747278">
        <id>P26367</id>
        <label>PAX6</label>
    </interactant>
    <organismsDiffer>false</organismsDiffer>
    <experiments>3</experiments>
</comment>
<comment type="interaction">
    <interactant intactId="EBI-10320311">
        <id>Q9UDX3</id>
    </interactant>
    <interactant intactId="EBI-742388">
        <id>Q9H8W4</id>
        <label>PLEKHF2</label>
    </interactant>
    <organismsDiffer>false</organismsDiffer>
    <experiments>3</experiments>
</comment>
<comment type="interaction">
    <interactant intactId="EBI-10320311">
        <id>Q9UDX3</id>
    </interactant>
    <interactant intactId="EBI-307352">
        <id>Q04864</id>
        <label>REL</label>
    </interactant>
    <organismsDiffer>false</organismsDiffer>
    <experiments>3</experiments>
</comment>
<comment type="interaction">
    <interactant intactId="EBI-10320311">
        <id>Q9UDX3</id>
    </interactant>
    <interactant intactId="EBI-10829018">
        <id>Q04864-2</id>
        <label>REL</label>
    </interactant>
    <organismsDiffer>false</organismsDiffer>
    <experiments>3</experiments>
</comment>
<comment type="interaction">
    <interactant intactId="EBI-10320311">
        <id>Q9UDX3</id>
    </interactant>
    <interactant intactId="EBI-748601">
        <id>Q9UHV2</id>
        <label>SERTAD1</label>
    </interactant>
    <organismsDiffer>false</organismsDiffer>
    <experiments>3</experiments>
</comment>
<comment type="interaction">
    <interactant intactId="EBI-10320311">
        <id>Q9UDX3</id>
    </interactant>
    <interactant intactId="EBI-533224">
        <id>P15884</id>
        <label>TCF4</label>
    </interactant>
    <organismsDiffer>false</organismsDiffer>
    <experiments>3</experiments>
</comment>
<comment type="interaction">
    <interactant intactId="EBI-10320311">
        <id>Q9UDX3</id>
    </interactant>
    <interactant intactId="EBI-13636688">
        <id>P15884-3</id>
        <label>TCF4</label>
    </interactant>
    <organismsDiffer>false</organismsDiffer>
    <experiments>3</experiments>
</comment>
<comment type="interaction">
    <interactant intactId="EBI-10320311">
        <id>Q9UDX3</id>
    </interactant>
    <interactant intactId="EBI-11139477">
        <id>Q96N21</id>
        <label>TEPSIN</label>
    </interactant>
    <organismsDiffer>false</organismsDiffer>
    <experiments>3</experiments>
</comment>
<comment type="interaction">
    <interactant intactId="EBI-10320311">
        <id>Q9UDX3</id>
    </interactant>
    <interactant intactId="EBI-2130429">
        <id>Q9BYV2</id>
        <label>TRIM54</label>
    </interactant>
    <organismsDiffer>false</organismsDiffer>
    <experiments>3</experiments>
</comment>
<comment type="interaction">
    <interactant intactId="EBI-10320311">
        <id>Q9UDX3</id>
    </interactant>
    <interactant intactId="EBI-739895">
        <id>Q8N6Y0</id>
        <label>USHBP1</label>
    </interactant>
    <organismsDiffer>false</organismsDiffer>
    <experiments>6</experiments>
</comment>
<comment type="interaction">
    <interactant intactId="EBI-10320311">
        <id>Q9UDX3</id>
    </interactant>
    <interactant intactId="EBI-12030590">
        <id>Q9H0C1</id>
        <label>ZMYND12</label>
    </interactant>
    <organismsDiffer>false</organismsDiffer>
    <experiments>3</experiments>
</comment>
<comment type="alternative products">
    <event type="alternative splicing"/>
    <isoform>
        <id>Q9UDX3-1</id>
        <name>1</name>
        <sequence type="displayed"/>
    </isoform>
    <isoform>
        <id>Q9UDX3-2</id>
        <name>2</name>
        <sequence type="described" ref="VSP_045200"/>
    </isoform>
</comment>
<dbReference type="EMBL" id="AY158085">
    <property type="protein sequence ID" value="AAO21869.1"/>
    <property type="molecule type" value="mRNA"/>
</dbReference>
<dbReference type="EMBL" id="AC004832">
    <property type="protein sequence ID" value="AAF19259.1"/>
    <property type="molecule type" value="Genomic_DNA"/>
</dbReference>
<dbReference type="EMBL" id="BC139912">
    <property type="protein sequence ID" value="AAI39913.1"/>
    <property type="molecule type" value="mRNA"/>
</dbReference>
<dbReference type="CCDS" id="CCDS13878.1">
    <molecule id="Q9UDX3-1"/>
</dbReference>
<dbReference type="CCDS" id="CCDS54517.1">
    <molecule id="Q9UDX3-2"/>
</dbReference>
<dbReference type="RefSeq" id="NP_001154840.1">
    <molecule id="Q9UDX3-2"/>
    <property type="nucleotide sequence ID" value="NM_001161368.3"/>
</dbReference>
<dbReference type="RefSeq" id="NP_777637.1">
    <molecule id="Q9UDX3-1"/>
    <property type="nucleotide sequence ID" value="NM_174977.4"/>
</dbReference>
<dbReference type="PDB" id="4TLG">
    <property type="method" value="X-ray"/>
    <property type="resolution" value="1.77 A"/>
    <property type="chains" value="A/B=1-406"/>
</dbReference>
<dbReference type="PDBsum" id="4TLG"/>
<dbReference type="SMR" id="Q9UDX3"/>
<dbReference type="BioGRID" id="129974">
    <property type="interactions" value="23"/>
</dbReference>
<dbReference type="FunCoup" id="Q9UDX3">
    <property type="interactions" value="404"/>
</dbReference>
<dbReference type="IntAct" id="Q9UDX3">
    <property type="interactions" value="20"/>
</dbReference>
<dbReference type="STRING" id="9606.ENSP00000255858"/>
<dbReference type="DrugBank" id="DB14003">
    <property type="generic name" value="alpha-Tocopherol acetate"/>
</dbReference>
<dbReference type="DrugBank" id="DB11635">
    <property type="generic name" value="Tocofersolan"/>
</dbReference>
<dbReference type="DrugBank" id="DB11251">
    <property type="generic name" value="Tocopherol"/>
</dbReference>
<dbReference type="DrugBank" id="DB00163">
    <property type="generic name" value="Vitamin E"/>
</dbReference>
<dbReference type="TCDB" id="9.B.17.2.2">
    <property type="family name" value="the vamp-associated protein (vap) family"/>
</dbReference>
<dbReference type="GlyGen" id="Q9UDX3">
    <property type="glycosylation" value="1 site, 1 O-linked glycan (1 site)"/>
</dbReference>
<dbReference type="iPTMnet" id="Q9UDX3"/>
<dbReference type="PhosphoSitePlus" id="Q9UDX3"/>
<dbReference type="BioMuta" id="SEC14L4"/>
<dbReference type="DMDM" id="29337003"/>
<dbReference type="jPOST" id="Q9UDX3"/>
<dbReference type="MassIVE" id="Q9UDX3"/>
<dbReference type="PaxDb" id="9606-ENSP00000255858"/>
<dbReference type="PeptideAtlas" id="Q9UDX3"/>
<dbReference type="ProteomicsDB" id="709"/>
<dbReference type="ProteomicsDB" id="84123">
    <molecule id="Q9UDX3-1"/>
</dbReference>
<dbReference type="Antibodypedia" id="45388">
    <property type="antibodies" value="106 antibodies from 20 providers"/>
</dbReference>
<dbReference type="DNASU" id="284904"/>
<dbReference type="Ensembl" id="ENST00000255858.12">
    <molecule id="Q9UDX3-1"/>
    <property type="protein sequence ID" value="ENSP00000255858.7"/>
    <property type="gene ID" value="ENSG00000133488.15"/>
</dbReference>
<dbReference type="Ensembl" id="ENST00000381982.3">
    <molecule id="Q9UDX3-2"/>
    <property type="protein sequence ID" value="ENSP00000371412.3"/>
    <property type="gene ID" value="ENSG00000133488.15"/>
</dbReference>
<dbReference type="GeneID" id="284904"/>
<dbReference type="KEGG" id="hsa:284904"/>
<dbReference type="MANE-Select" id="ENST00000255858.12">
    <property type="protein sequence ID" value="ENSP00000255858.7"/>
    <property type="RefSeq nucleotide sequence ID" value="NM_174977.4"/>
    <property type="RefSeq protein sequence ID" value="NP_777637.1"/>
</dbReference>
<dbReference type="UCSC" id="uc003aid.4">
    <molecule id="Q9UDX3-1"/>
    <property type="organism name" value="human"/>
</dbReference>
<dbReference type="AGR" id="HGNC:20627"/>
<dbReference type="CTD" id="284904"/>
<dbReference type="DisGeNET" id="284904"/>
<dbReference type="GeneCards" id="SEC14L4"/>
<dbReference type="HGNC" id="HGNC:20627">
    <property type="gene designation" value="SEC14L4"/>
</dbReference>
<dbReference type="HPA" id="ENSG00000133488">
    <property type="expression patterns" value="Tissue enhanced (bone marrow, liver)"/>
</dbReference>
<dbReference type="MIM" id="612825">
    <property type="type" value="gene"/>
</dbReference>
<dbReference type="neXtProt" id="NX_Q9UDX3"/>
<dbReference type="OpenTargets" id="ENSG00000133488"/>
<dbReference type="PharmGKB" id="PA134979694"/>
<dbReference type="VEuPathDB" id="HostDB:ENSG00000133488"/>
<dbReference type="eggNOG" id="KOG1471">
    <property type="taxonomic scope" value="Eukaryota"/>
</dbReference>
<dbReference type="GeneTree" id="ENSGT00940000162471"/>
<dbReference type="HOGENOM" id="CLU_014001_2_1_1"/>
<dbReference type="InParanoid" id="Q9UDX3"/>
<dbReference type="OMA" id="CEKAGRY"/>
<dbReference type="OrthoDB" id="1434354at2759"/>
<dbReference type="PAN-GO" id="Q9UDX3">
    <property type="GO annotations" value="1 GO annotation based on evolutionary models"/>
</dbReference>
<dbReference type="PhylomeDB" id="Q9UDX3"/>
<dbReference type="TreeFam" id="TF313988"/>
<dbReference type="PathwayCommons" id="Q9UDX3"/>
<dbReference type="SignaLink" id="Q9UDX3"/>
<dbReference type="BioGRID-ORCS" id="284904">
    <property type="hits" value="14 hits in 1155 CRISPR screens"/>
</dbReference>
<dbReference type="ChiTaRS" id="SEC14L4">
    <property type="organism name" value="human"/>
</dbReference>
<dbReference type="EvolutionaryTrace" id="Q9UDX3"/>
<dbReference type="GenomeRNAi" id="284904"/>
<dbReference type="Pharos" id="Q9UDX3">
    <property type="development level" value="Tbio"/>
</dbReference>
<dbReference type="PRO" id="PR:Q9UDX3"/>
<dbReference type="Proteomes" id="UP000005640">
    <property type="component" value="Chromosome 22"/>
</dbReference>
<dbReference type="RNAct" id="Q9UDX3">
    <property type="molecule type" value="protein"/>
</dbReference>
<dbReference type="Bgee" id="ENSG00000133488">
    <property type="expression patterns" value="Expressed in buccal mucosa cell and 80 other cell types or tissues"/>
</dbReference>
<dbReference type="ExpressionAtlas" id="Q9UDX3">
    <property type="expression patterns" value="baseline and differential"/>
</dbReference>
<dbReference type="GO" id="GO:0005737">
    <property type="term" value="C:cytoplasm"/>
    <property type="evidence" value="ECO:0000318"/>
    <property type="project" value="GO_Central"/>
</dbReference>
<dbReference type="GO" id="GO:0008289">
    <property type="term" value="F:lipid binding"/>
    <property type="evidence" value="ECO:0007669"/>
    <property type="project" value="UniProtKB-KW"/>
</dbReference>
<dbReference type="CDD" id="cd00170">
    <property type="entry name" value="SEC14"/>
    <property type="match status" value="1"/>
</dbReference>
<dbReference type="FunFam" id="3.40.525.10:FF:000009">
    <property type="entry name" value="SEC14-like 2 (S. cerevisiae)"/>
    <property type="match status" value="1"/>
</dbReference>
<dbReference type="Gene3D" id="3.40.525.10">
    <property type="entry name" value="CRAL-TRIO lipid binding domain"/>
    <property type="match status" value="1"/>
</dbReference>
<dbReference type="Gene3D" id="2.60.120.680">
    <property type="entry name" value="GOLD domain"/>
    <property type="match status" value="1"/>
</dbReference>
<dbReference type="InterPro" id="IPR001251">
    <property type="entry name" value="CRAL-TRIO_dom"/>
</dbReference>
<dbReference type="InterPro" id="IPR036865">
    <property type="entry name" value="CRAL-TRIO_dom_sf"/>
</dbReference>
<dbReference type="InterPro" id="IPR011074">
    <property type="entry name" value="CRAL/TRIO_N_dom"/>
</dbReference>
<dbReference type="InterPro" id="IPR036273">
    <property type="entry name" value="CRAL/TRIO_N_dom_sf"/>
</dbReference>
<dbReference type="InterPro" id="IPR009038">
    <property type="entry name" value="GOLD_dom"/>
</dbReference>
<dbReference type="InterPro" id="IPR036598">
    <property type="entry name" value="GOLD_dom_sf"/>
</dbReference>
<dbReference type="InterPro" id="IPR051064">
    <property type="entry name" value="SEC14/CRAL-TRIO_domain"/>
</dbReference>
<dbReference type="PANTHER" id="PTHR23324">
    <property type="entry name" value="SEC14 RELATED PROTEIN"/>
    <property type="match status" value="1"/>
</dbReference>
<dbReference type="PANTHER" id="PTHR23324:SF42">
    <property type="entry name" value="SEC14-LIKE PROTEIN 4"/>
    <property type="match status" value="1"/>
</dbReference>
<dbReference type="Pfam" id="PF00650">
    <property type="entry name" value="CRAL_TRIO"/>
    <property type="match status" value="1"/>
</dbReference>
<dbReference type="Pfam" id="PF03765">
    <property type="entry name" value="CRAL_TRIO_N"/>
    <property type="match status" value="1"/>
</dbReference>
<dbReference type="PRINTS" id="PR00180">
    <property type="entry name" value="CRETINALDHBP"/>
</dbReference>
<dbReference type="SMART" id="SM01100">
    <property type="entry name" value="CRAL_TRIO_N"/>
    <property type="match status" value="1"/>
</dbReference>
<dbReference type="SMART" id="SM00516">
    <property type="entry name" value="SEC14"/>
    <property type="match status" value="1"/>
</dbReference>
<dbReference type="SUPFAM" id="SSF52087">
    <property type="entry name" value="CRAL/TRIO domain"/>
    <property type="match status" value="1"/>
</dbReference>
<dbReference type="SUPFAM" id="SSF46938">
    <property type="entry name" value="CRAL/TRIO N-terminal domain"/>
    <property type="match status" value="1"/>
</dbReference>
<dbReference type="SUPFAM" id="SSF101576">
    <property type="entry name" value="Supernatant protein factor (SPF), C-terminal domain"/>
    <property type="match status" value="1"/>
</dbReference>
<dbReference type="PROSITE" id="PS50191">
    <property type="entry name" value="CRAL_TRIO"/>
    <property type="match status" value="1"/>
</dbReference>
<dbReference type="PROSITE" id="PS50866">
    <property type="entry name" value="GOLD"/>
    <property type="match status" value="1"/>
</dbReference>
<proteinExistence type="evidence at protein level"/>
<accession>Q9UDX3</accession>
<accession>A5D6W7</accession>
<accession>A6NCV4</accession>
<organism>
    <name type="scientific">Homo sapiens</name>
    <name type="common">Human</name>
    <dbReference type="NCBI Taxonomy" id="9606"/>
    <lineage>
        <taxon>Eukaryota</taxon>
        <taxon>Metazoa</taxon>
        <taxon>Chordata</taxon>
        <taxon>Craniata</taxon>
        <taxon>Vertebrata</taxon>
        <taxon>Euteleostomi</taxon>
        <taxon>Mammalia</taxon>
        <taxon>Eutheria</taxon>
        <taxon>Euarchontoglires</taxon>
        <taxon>Primates</taxon>
        <taxon>Haplorrhini</taxon>
        <taxon>Catarrhini</taxon>
        <taxon>Hominidae</taxon>
        <taxon>Homo</taxon>
    </lineage>
</organism>
<reference key="1">
    <citation type="journal article" date="2003" name="Free Radic. Biol. Med.">
        <title>Cloning of novel human SEC14p-like proteins: ligand binding and functional properties.</title>
        <authorList>
            <person name="Kempna P."/>
            <person name="Zingg J.-M."/>
            <person name="Ricciarelli R."/>
            <person name="Hierl M."/>
            <person name="Saxena S."/>
            <person name="Azzi A."/>
        </authorList>
    </citation>
    <scope>NUCLEOTIDE SEQUENCE [MRNA] (ISOFORM 1)</scope>
</reference>
<reference key="2">
    <citation type="journal article" date="1999" name="Nature">
        <title>The DNA sequence of human chromosome 22.</title>
        <authorList>
            <person name="Dunham I."/>
            <person name="Hunt A.R."/>
            <person name="Collins J.E."/>
            <person name="Bruskiewich R."/>
            <person name="Beare D.M."/>
            <person name="Clamp M."/>
            <person name="Smink L.J."/>
            <person name="Ainscough R."/>
            <person name="Almeida J.P."/>
            <person name="Babbage A.K."/>
            <person name="Bagguley C."/>
            <person name="Bailey J."/>
            <person name="Barlow K.F."/>
            <person name="Bates K.N."/>
            <person name="Beasley O.P."/>
            <person name="Bird C.P."/>
            <person name="Blakey S.E."/>
            <person name="Bridgeman A.M."/>
            <person name="Buck D."/>
            <person name="Burgess J."/>
            <person name="Burrill W.D."/>
            <person name="Burton J."/>
            <person name="Carder C."/>
            <person name="Carter N.P."/>
            <person name="Chen Y."/>
            <person name="Clark G."/>
            <person name="Clegg S.M."/>
            <person name="Cobley V.E."/>
            <person name="Cole C.G."/>
            <person name="Collier R.E."/>
            <person name="Connor R."/>
            <person name="Conroy D."/>
            <person name="Corby N.R."/>
            <person name="Coville G.J."/>
            <person name="Cox A.V."/>
            <person name="Davis J."/>
            <person name="Dawson E."/>
            <person name="Dhami P.D."/>
            <person name="Dockree C."/>
            <person name="Dodsworth S.J."/>
            <person name="Durbin R.M."/>
            <person name="Ellington A.G."/>
            <person name="Evans K.L."/>
            <person name="Fey J.M."/>
            <person name="Fleming K."/>
            <person name="French L."/>
            <person name="Garner A.A."/>
            <person name="Gilbert J.G.R."/>
            <person name="Goward M.E."/>
            <person name="Grafham D.V."/>
            <person name="Griffiths M.N.D."/>
            <person name="Hall C."/>
            <person name="Hall R.E."/>
            <person name="Hall-Tamlyn G."/>
            <person name="Heathcott R.W."/>
            <person name="Ho S."/>
            <person name="Holmes S."/>
            <person name="Hunt S.E."/>
            <person name="Jones M.C."/>
            <person name="Kershaw J."/>
            <person name="Kimberley A.M."/>
            <person name="King A."/>
            <person name="Laird G.K."/>
            <person name="Langford C.F."/>
            <person name="Leversha M.A."/>
            <person name="Lloyd C."/>
            <person name="Lloyd D.M."/>
            <person name="Martyn I.D."/>
            <person name="Mashreghi-Mohammadi M."/>
            <person name="Matthews L.H."/>
            <person name="Mccann O.T."/>
            <person name="Mcclay J."/>
            <person name="Mclaren S."/>
            <person name="McMurray A.A."/>
            <person name="Milne S.A."/>
            <person name="Mortimore B.J."/>
            <person name="Odell C.N."/>
            <person name="Pavitt R."/>
            <person name="Pearce A.V."/>
            <person name="Pearson D."/>
            <person name="Phillimore B.J.C.T."/>
            <person name="Phillips S.H."/>
            <person name="Plumb R.W."/>
            <person name="Ramsay H."/>
            <person name="Ramsey Y."/>
            <person name="Rogers L."/>
            <person name="Ross M.T."/>
            <person name="Scott C.E."/>
            <person name="Sehra H.K."/>
            <person name="Skuce C.D."/>
            <person name="Smalley S."/>
            <person name="Smith M.L."/>
            <person name="Soderlund C."/>
            <person name="Spragon L."/>
            <person name="Steward C.A."/>
            <person name="Sulston J.E."/>
            <person name="Swann R.M."/>
            <person name="Vaudin M."/>
            <person name="Wall M."/>
            <person name="Wallis J.M."/>
            <person name="Whiteley M.N."/>
            <person name="Willey D.L."/>
            <person name="Williams L."/>
            <person name="Williams S.A."/>
            <person name="Williamson H."/>
            <person name="Wilmer T.E."/>
            <person name="Wilming L."/>
            <person name="Wright C.L."/>
            <person name="Hubbard T."/>
            <person name="Bentley D.R."/>
            <person name="Beck S."/>
            <person name="Rogers J."/>
            <person name="Shimizu N."/>
            <person name="Minoshima S."/>
            <person name="Kawasaki K."/>
            <person name="Sasaki T."/>
            <person name="Asakawa S."/>
            <person name="Kudoh J."/>
            <person name="Shintani A."/>
            <person name="Shibuya K."/>
            <person name="Yoshizaki Y."/>
            <person name="Aoki N."/>
            <person name="Mitsuyama S."/>
            <person name="Roe B.A."/>
            <person name="Chen F."/>
            <person name="Chu L."/>
            <person name="Crabtree J."/>
            <person name="Deschamps S."/>
            <person name="Do A."/>
            <person name="Do T."/>
            <person name="Dorman A."/>
            <person name="Fang F."/>
            <person name="Fu Y."/>
            <person name="Hu P."/>
            <person name="Hua A."/>
            <person name="Kenton S."/>
            <person name="Lai H."/>
            <person name="Lao H.I."/>
            <person name="Lewis J."/>
            <person name="Lewis S."/>
            <person name="Lin S.-P."/>
            <person name="Loh P."/>
            <person name="Malaj E."/>
            <person name="Nguyen T."/>
            <person name="Pan H."/>
            <person name="Phan S."/>
            <person name="Qi S."/>
            <person name="Qian Y."/>
            <person name="Ray L."/>
            <person name="Ren Q."/>
            <person name="Shaull S."/>
            <person name="Sloan D."/>
            <person name="Song L."/>
            <person name="Wang Q."/>
            <person name="Wang Y."/>
            <person name="Wang Z."/>
            <person name="White J."/>
            <person name="Willingham D."/>
            <person name="Wu H."/>
            <person name="Yao Z."/>
            <person name="Zhan M."/>
            <person name="Zhang G."/>
            <person name="Chissoe S."/>
            <person name="Murray J."/>
            <person name="Miller N."/>
            <person name="Minx P."/>
            <person name="Fulton R."/>
            <person name="Johnson D."/>
            <person name="Bemis G."/>
            <person name="Bentley D."/>
            <person name="Bradshaw H."/>
            <person name="Bourne S."/>
            <person name="Cordes M."/>
            <person name="Du Z."/>
            <person name="Fulton L."/>
            <person name="Goela D."/>
            <person name="Graves T."/>
            <person name="Hawkins J."/>
            <person name="Hinds K."/>
            <person name="Kemp K."/>
            <person name="Latreille P."/>
            <person name="Layman D."/>
            <person name="Ozersky P."/>
            <person name="Rohlfing T."/>
            <person name="Scheet P."/>
            <person name="Walker C."/>
            <person name="Wamsley A."/>
            <person name="Wohldmann P."/>
            <person name="Pepin K."/>
            <person name="Nelson J."/>
            <person name="Korf I."/>
            <person name="Bedell J.A."/>
            <person name="Hillier L.W."/>
            <person name="Mardis E."/>
            <person name="Waterston R."/>
            <person name="Wilson R."/>
            <person name="Emanuel B.S."/>
            <person name="Shaikh T."/>
            <person name="Kurahashi H."/>
            <person name="Saitta S."/>
            <person name="Budarf M.L."/>
            <person name="McDermid H.E."/>
            <person name="Johnson A."/>
            <person name="Wong A.C.C."/>
            <person name="Morrow B.E."/>
            <person name="Edelmann L."/>
            <person name="Kim U.J."/>
            <person name="Shizuya H."/>
            <person name="Simon M.I."/>
            <person name="Dumanski J.P."/>
            <person name="Peyrard M."/>
            <person name="Kedra D."/>
            <person name="Seroussi E."/>
            <person name="Fransson I."/>
            <person name="Tapia I."/>
            <person name="Bruder C.E."/>
            <person name="O'Brien K.P."/>
            <person name="Wilkinson P."/>
            <person name="Bodenteich A."/>
            <person name="Hartman K."/>
            <person name="Hu X."/>
            <person name="Khan A.S."/>
            <person name="Lane L."/>
            <person name="Tilahun Y."/>
            <person name="Wright H."/>
        </authorList>
    </citation>
    <scope>NUCLEOTIDE SEQUENCE [LARGE SCALE GENOMIC DNA]</scope>
</reference>
<reference key="3">
    <citation type="journal article" date="2004" name="Genome Res.">
        <title>The status, quality, and expansion of the NIH full-length cDNA project: the Mammalian Gene Collection (MGC).</title>
        <authorList>
            <consortium name="The MGC Project Team"/>
        </authorList>
    </citation>
    <scope>NUCLEOTIDE SEQUENCE [LARGE SCALE MRNA] (ISOFORM 2)</scope>
</reference>
<reference key="4">
    <citation type="journal article" date="2014" name="J. Proteomics">
        <title>An enzyme assisted RP-RPLC approach for in-depth analysis of human liver phosphoproteome.</title>
        <authorList>
            <person name="Bian Y."/>
            <person name="Song C."/>
            <person name="Cheng K."/>
            <person name="Dong M."/>
            <person name="Wang F."/>
            <person name="Huang J."/>
            <person name="Sun D."/>
            <person name="Wang L."/>
            <person name="Ye M."/>
            <person name="Zou H."/>
        </authorList>
    </citation>
    <scope>IDENTIFICATION BY MASS SPECTROMETRY [LARGE SCALE ANALYSIS]</scope>
    <source>
        <tissue>Liver</tissue>
    </source>
</reference>
<feature type="chain" id="PRO_0000210760" description="SEC14-like protein 4">
    <location>
        <begin position="1"/>
        <end position="406"/>
    </location>
</feature>
<feature type="domain" description="CRAL-TRIO" evidence="1">
    <location>
        <begin position="76"/>
        <end position="249"/>
    </location>
</feature>
<feature type="domain" description="GOLD" evidence="2">
    <location>
        <begin position="252"/>
        <end position="383"/>
    </location>
</feature>
<feature type="splice variant" id="VSP_045200" description="In isoform 2." evidence="3">
    <location>
        <begin position="361"/>
        <end position="406"/>
    </location>
</feature>
<feature type="sequence variant" id="VAR_024629" description="In dbSNP:rs9608956.">
    <original>S</original>
    <variation>G</variation>
    <location>
        <position position="3"/>
    </location>
</feature>
<feature type="sequence variant" id="VAR_051914" description="In dbSNP:rs9606739.">
    <original>R</original>
    <variation>G</variation>
    <location>
        <position position="124"/>
    </location>
</feature>
<feature type="sequence variant" id="VAR_051915" description="In dbSNP:rs17738540.">
    <original>V</original>
    <variation>M</variation>
    <location>
        <position position="200"/>
    </location>
</feature>
<feature type="sequence variant" id="VAR_051916" description="In dbSNP:rs17738527.">
    <original>E</original>
    <variation>K</variation>
    <location>
        <position position="211"/>
    </location>
</feature>
<feature type="helix" evidence="4">
    <location>
        <begin position="10"/>
        <end position="22"/>
    </location>
</feature>
<feature type="turn" evidence="4">
    <location>
        <begin position="23"/>
        <end position="26"/>
    </location>
</feature>
<feature type="helix" evidence="4">
    <location>
        <begin position="27"/>
        <end position="29"/>
    </location>
</feature>
<feature type="helix" evidence="4">
    <location>
        <begin position="35"/>
        <end position="44"/>
    </location>
</feature>
<feature type="turn" evidence="4">
    <location>
        <begin position="45"/>
        <end position="47"/>
    </location>
</feature>
<feature type="helix" evidence="4">
    <location>
        <begin position="49"/>
        <end position="65"/>
    </location>
</feature>
<feature type="helix" evidence="4">
    <location>
        <begin position="68"/>
        <end position="73"/>
    </location>
</feature>
<feature type="helix" evidence="4">
    <location>
        <begin position="78"/>
        <end position="83"/>
    </location>
</feature>
<feature type="strand" evidence="4">
    <location>
        <begin position="86"/>
        <end position="91"/>
    </location>
</feature>
<feature type="strand" evidence="4">
    <location>
        <begin position="97"/>
        <end position="101"/>
    </location>
</feature>
<feature type="helix" evidence="4">
    <location>
        <begin position="108"/>
        <end position="114"/>
    </location>
</feature>
<feature type="helix" evidence="4">
    <location>
        <begin position="117"/>
        <end position="142"/>
    </location>
</feature>
<feature type="strand" evidence="4">
    <location>
        <begin position="149"/>
        <end position="154"/>
    </location>
</feature>
<feature type="helix" evidence="4">
    <location>
        <begin position="160"/>
        <end position="163"/>
    </location>
</feature>
<feature type="helix" evidence="4">
    <location>
        <begin position="165"/>
        <end position="181"/>
    </location>
</feature>
<feature type="strand" evidence="4">
    <location>
        <begin position="186"/>
        <end position="193"/>
    </location>
</feature>
<feature type="helix" evidence="4">
    <location>
        <begin position="198"/>
        <end position="205"/>
    </location>
</feature>
<feature type="helix" evidence="4">
    <location>
        <begin position="206"/>
        <end position="208"/>
    </location>
</feature>
<feature type="helix" evidence="4">
    <location>
        <begin position="211"/>
        <end position="215"/>
    </location>
</feature>
<feature type="strand" evidence="4">
    <location>
        <begin position="217"/>
        <end position="219"/>
    </location>
</feature>
<feature type="helix" evidence="4">
    <location>
        <begin position="224"/>
        <end position="228"/>
    </location>
</feature>
<feature type="turn" evidence="4">
    <location>
        <begin position="229"/>
        <end position="231"/>
    </location>
</feature>
<feature type="helix" evidence="4">
    <location>
        <begin position="234"/>
        <end position="236"/>
    </location>
</feature>
<feature type="helix" evidence="4">
    <location>
        <begin position="239"/>
        <end position="241"/>
    </location>
</feature>
<feature type="strand" evidence="4">
    <location>
        <begin position="243"/>
        <end position="245"/>
    </location>
</feature>
<feature type="turn" evidence="4">
    <location>
        <begin position="255"/>
        <end position="257"/>
    </location>
</feature>
<feature type="helix" evidence="4">
    <location>
        <begin position="266"/>
        <end position="268"/>
    </location>
</feature>
<feature type="strand" evidence="4">
    <location>
        <begin position="279"/>
        <end position="284"/>
    </location>
</feature>
<feature type="strand" evidence="4">
    <location>
        <begin position="289"/>
        <end position="296"/>
    </location>
</feature>
<feature type="strand" evidence="4">
    <location>
        <begin position="302"/>
        <end position="312"/>
    </location>
</feature>
<feature type="strand" evidence="4">
    <location>
        <begin position="314"/>
        <end position="320"/>
    </location>
</feature>
<feature type="strand" evidence="4">
    <location>
        <begin position="322"/>
        <end position="326"/>
    </location>
</feature>
<feature type="turn" evidence="4">
    <location>
        <begin position="330"/>
        <end position="332"/>
    </location>
</feature>
<feature type="strand" evidence="4">
    <location>
        <begin position="333"/>
        <end position="342"/>
    </location>
</feature>
<feature type="turn" evidence="4">
    <location>
        <begin position="344"/>
        <end position="346"/>
    </location>
</feature>
<feature type="strand" evidence="4">
    <location>
        <begin position="349"/>
        <end position="354"/>
    </location>
</feature>
<feature type="strand" evidence="4">
    <location>
        <begin position="357"/>
        <end position="366"/>
    </location>
</feature>
<feature type="strand" evidence="4">
    <location>
        <begin position="375"/>
        <end position="384"/>
    </location>
</feature>
<feature type="helix" evidence="4">
    <location>
        <begin position="388"/>
        <end position="396"/>
    </location>
</feature>
<evidence type="ECO:0000255" key="1">
    <source>
        <dbReference type="PROSITE-ProRule" id="PRU00056"/>
    </source>
</evidence>
<evidence type="ECO:0000255" key="2">
    <source>
        <dbReference type="PROSITE-ProRule" id="PRU00096"/>
    </source>
</evidence>
<evidence type="ECO:0000303" key="3">
    <source>
    </source>
</evidence>
<evidence type="ECO:0007829" key="4">
    <source>
        <dbReference type="PDB" id="4TLG"/>
    </source>
</evidence>